<gene>
    <name type="primary">cbiX</name>
    <name type="ordered locus">VNG_1093C</name>
</gene>
<comment type="function">
    <text evidence="1">Catalyzes the insertion of Co(2+) into sirohydrochlorin as part of the anaerobic pathway to cobalamin biosynthesis.</text>
</comment>
<comment type="catalytic activity">
    <reaction>
        <text>Co-sirohydrochlorin + 2 H(+) = sirohydrochlorin + Co(2+)</text>
        <dbReference type="Rhea" id="RHEA:15893"/>
        <dbReference type="ChEBI" id="CHEBI:15378"/>
        <dbReference type="ChEBI" id="CHEBI:48828"/>
        <dbReference type="ChEBI" id="CHEBI:58351"/>
        <dbReference type="ChEBI" id="CHEBI:60049"/>
        <dbReference type="EC" id="4.99.1.3"/>
    </reaction>
</comment>
<comment type="pathway">
    <text>Cofactor biosynthesis; adenosylcobalamin biosynthesis; cob(II)yrinate a,c-diamide from sirohydrochlorin (anaerobic route): step 1/10.</text>
</comment>
<comment type="domain">
    <text>Seems to consist of two fused copies of the CbiX domain, resembling CbiK arrangement.</text>
</comment>
<comment type="similarity">
    <text evidence="2">Belongs to the CbiX family. CbiXS subfamily.</text>
</comment>
<sequence length="292" mass="31985">MQALVIVGHGSHLNPGSSEPAYTHADTIRESGAFDEVREAFWKEEPSFRNVLRTLESDEVYVVPLFISEGYFTEQVIPRELRLDDFDPDDWDSDGTDADHVTLEADDVEKTIHYCGPVGTHDSMSEVIVQRASSVTGREEFGDDFGLAVVGHGTERNENSAKAIYYHADQIREMGVFGEVQAVFMDEDPEVDDVTDFFDTDDIVVVPLFVSDGFHTQEDIPEDMGLTDDYRTGYDIPTAVDGHDIWYSGAVGTEPLAADVVLERAADAGAPVGDAVDAVREQTRGANAAAGD</sequence>
<reference key="1">
    <citation type="journal article" date="2000" name="Proc. Natl. Acad. Sci. U.S.A.">
        <title>Genome sequence of Halobacterium species NRC-1.</title>
        <authorList>
            <person name="Ng W.V."/>
            <person name="Kennedy S.P."/>
            <person name="Mahairas G.G."/>
            <person name="Berquist B."/>
            <person name="Pan M."/>
            <person name="Shukla H.D."/>
            <person name="Lasky S.R."/>
            <person name="Baliga N.S."/>
            <person name="Thorsson V."/>
            <person name="Sbrogna J."/>
            <person name="Swartzell S."/>
            <person name="Weir D."/>
            <person name="Hall J."/>
            <person name="Dahl T.A."/>
            <person name="Welti R."/>
            <person name="Goo Y.A."/>
            <person name="Leithauser B."/>
            <person name="Keller K."/>
            <person name="Cruz R."/>
            <person name="Danson M.J."/>
            <person name="Hough D.W."/>
            <person name="Maddocks D.G."/>
            <person name="Jablonski P.E."/>
            <person name="Krebs M.P."/>
            <person name="Angevine C.M."/>
            <person name="Dale H."/>
            <person name="Isenbarger T.A."/>
            <person name="Peck R.F."/>
            <person name="Pohlschroder M."/>
            <person name="Spudich J.L."/>
            <person name="Jung K.-H."/>
            <person name="Alam M."/>
            <person name="Freitas T."/>
            <person name="Hou S."/>
            <person name="Daniels C.J."/>
            <person name="Dennis P.P."/>
            <person name="Omer A.D."/>
            <person name="Ebhardt H."/>
            <person name="Lowe T.M."/>
            <person name="Liang P."/>
            <person name="Riley M."/>
            <person name="Hood L."/>
            <person name="DasSarma S."/>
        </authorList>
    </citation>
    <scope>NUCLEOTIDE SEQUENCE [LARGE SCALE GENOMIC DNA]</scope>
    <source>
        <strain>ATCC 700922 / JCM 11081 / NRC-1</strain>
    </source>
</reference>
<feature type="chain" id="PRO_0000150364" description="Probable sirohydrochlorin cobaltochelatase">
    <location>
        <begin position="1"/>
        <end position="292"/>
    </location>
</feature>
<feature type="region of interest" description="CbiX 1">
    <location>
        <begin position="1"/>
        <end position="141"/>
    </location>
</feature>
<feature type="region of interest" description="CbiX 2">
    <location>
        <begin position="142"/>
        <end position="292"/>
    </location>
</feature>
<feature type="binding site" evidence="1">
    <location>
        <position position="152"/>
    </location>
    <ligand>
        <name>Co(2+)</name>
        <dbReference type="ChEBI" id="CHEBI:48828"/>
    </ligand>
</feature>
<feature type="binding site" evidence="1">
    <location>
        <position position="215"/>
    </location>
    <ligand>
        <name>Co(2+)</name>
        <dbReference type="ChEBI" id="CHEBI:48828"/>
    </ligand>
</feature>
<name>CBIX_HALSA</name>
<organism>
    <name type="scientific">Halobacterium salinarum (strain ATCC 700922 / JCM 11081 / NRC-1)</name>
    <name type="common">Halobacterium halobium</name>
    <dbReference type="NCBI Taxonomy" id="64091"/>
    <lineage>
        <taxon>Archaea</taxon>
        <taxon>Methanobacteriati</taxon>
        <taxon>Methanobacteriota</taxon>
        <taxon>Stenosarchaea group</taxon>
        <taxon>Halobacteria</taxon>
        <taxon>Halobacteriales</taxon>
        <taxon>Halobacteriaceae</taxon>
        <taxon>Halobacterium</taxon>
        <taxon>Halobacterium salinarum NRC-34001</taxon>
    </lineage>
</organism>
<proteinExistence type="inferred from homology"/>
<protein>
    <recommendedName>
        <fullName>Probable sirohydrochlorin cobaltochelatase</fullName>
        <ecNumber>4.99.1.3</ecNumber>
    </recommendedName>
    <alternativeName>
        <fullName>CbiXS</fullName>
    </alternativeName>
</protein>
<dbReference type="EC" id="4.99.1.3"/>
<dbReference type="EMBL" id="AE004437">
    <property type="protein sequence ID" value="AAG19490.1"/>
    <property type="molecule type" value="Genomic_DNA"/>
</dbReference>
<dbReference type="PIR" id="F84265">
    <property type="entry name" value="F84265"/>
</dbReference>
<dbReference type="RefSeq" id="WP_010902785.1">
    <property type="nucleotide sequence ID" value="NC_002607.1"/>
</dbReference>
<dbReference type="SMR" id="Q9HQM3"/>
<dbReference type="STRING" id="64091.VNG_1093C"/>
<dbReference type="PaxDb" id="64091-VNG_1093C"/>
<dbReference type="KEGG" id="hal:VNG_1093C"/>
<dbReference type="PATRIC" id="fig|64091.14.peg.836"/>
<dbReference type="HOGENOM" id="CLU_096061_0_0_2"/>
<dbReference type="InParanoid" id="Q9HQM3"/>
<dbReference type="OrthoDB" id="11653at2157"/>
<dbReference type="PhylomeDB" id="Q9HQM3"/>
<dbReference type="UniPathway" id="UPA00148">
    <property type="reaction ID" value="UER00223"/>
</dbReference>
<dbReference type="Proteomes" id="UP000000554">
    <property type="component" value="Chromosome"/>
</dbReference>
<dbReference type="GO" id="GO:0046872">
    <property type="term" value="F:metal ion binding"/>
    <property type="evidence" value="ECO:0007669"/>
    <property type="project" value="UniProtKB-KW"/>
</dbReference>
<dbReference type="GO" id="GO:0016852">
    <property type="term" value="F:sirohydrochlorin cobaltochelatase activity"/>
    <property type="evidence" value="ECO:0007669"/>
    <property type="project" value="UniProtKB-EC"/>
</dbReference>
<dbReference type="GO" id="GO:0009236">
    <property type="term" value="P:cobalamin biosynthetic process"/>
    <property type="evidence" value="ECO:0007669"/>
    <property type="project" value="UniProtKB-UniPathway"/>
</dbReference>
<dbReference type="CDD" id="cd03416">
    <property type="entry name" value="CbiX_SirB_N"/>
    <property type="match status" value="2"/>
</dbReference>
<dbReference type="Gene3D" id="3.40.50.1400">
    <property type="match status" value="2"/>
</dbReference>
<dbReference type="InterPro" id="IPR002762">
    <property type="entry name" value="CbiX-like"/>
</dbReference>
<dbReference type="InterPro" id="IPR050963">
    <property type="entry name" value="Sirohydro_Cobaltochel/CbiX"/>
</dbReference>
<dbReference type="NCBIfam" id="NF002670">
    <property type="entry name" value="PRK02395.1-1"/>
    <property type="match status" value="1"/>
</dbReference>
<dbReference type="NCBIfam" id="NF002671">
    <property type="entry name" value="PRK02395.1-3"/>
    <property type="match status" value="1"/>
</dbReference>
<dbReference type="PANTHER" id="PTHR33542">
    <property type="entry name" value="SIROHYDROCHLORIN FERROCHELATASE, CHLOROPLASTIC"/>
    <property type="match status" value="1"/>
</dbReference>
<dbReference type="PANTHER" id="PTHR33542:SF3">
    <property type="entry name" value="SIROHYDROCHLORIN FERROCHELATASE, CHLOROPLASTIC"/>
    <property type="match status" value="1"/>
</dbReference>
<dbReference type="Pfam" id="PF01903">
    <property type="entry name" value="CbiX"/>
    <property type="match status" value="2"/>
</dbReference>
<dbReference type="SUPFAM" id="SSF53800">
    <property type="entry name" value="Chelatase"/>
    <property type="match status" value="1"/>
</dbReference>
<keyword id="KW-0169">Cobalamin biosynthesis</keyword>
<keyword id="KW-0170">Cobalt</keyword>
<keyword id="KW-0456">Lyase</keyword>
<keyword id="KW-0479">Metal-binding</keyword>
<keyword id="KW-1185">Reference proteome</keyword>
<keyword id="KW-0677">Repeat</keyword>
<evidence type="ECO:0000250" key="1"/>
<evidence type="ECO:0000305" key="2"/>
<accession>Q9HQM3</accession>